<organism>
    <name type="scientific">Listeria innocua serovar 6a (strain ATCC BAA-680 / CLIP 11262)</name>
    <dbReference type="NCBI Taxonomy" id="272626"/>
    <lineage>
        <taxon>Bacteria</taxon>
        <taxon>Bacillati</taxon>
        <taxon>Bacillota</taxon>
        <taxon>Bacilli</taxon>
        <taxon>Bacillales</taxon>
        <taxon>Listeriaceae</taxon>
        <taxon>Listeria</taxon>
    </lineage>
</organism>
<gene>
    <name evidence="1" type="primary">leuD</name>
    <name type="ordered locus">lin2097</name>
</gene>
<name>LEUD_LISIN</name>
<comment type="function">
    <text evidence="1">Catalyzes the isomerization between 2-isopropylmalate and 3-isopropylmalate, via the formation of 2-isopropylmaleate.</text>
</comment>
<comment type="catalytic activity">
    <reaction evidence="1">
        <text>(2R,3S)-3-isopropylmalate = (2S)-2-isopropylmalate</text>
        <dbReference type="Rhea" id="RHEA:32287"/>
        <dbReference type="ChEBI" id="CHEBI:1178"/>
        <dbReference type="ChEBI" id="CHEBI:35121"/>
        <dbReference type="EC" id="4.2.1.33"/>
    </reaction>
</comment>
<comment type="pathway">
    <text evidence="1">Amino-acid biosynthesis; L-leucine biosynthesis; L-leucine from 3-methyl-2-oxobutanoate: step 2/4.</text>
</comment>
<comment type="subunit">
    <text evidence="1">Heterodimer of LeuC and LeuD.</text>
</comment>
<comment type="similarity">
    <text evidence="1">Belongs to the LeuD family. LeuD type 1 subfamily.</text>
</comment>
<accession>Q92A25</accession>
<proteinExistence type="inferred from homology"/>
<reference key="1">
    <citation type="journal article" date="2001" name="Science">
        <title>Comparative genomics of Listeria species.</title>
        <authorList>
            <person name="Glaser P."/>
            <person name="Frangeul L."/>
            <person name="Buchrieser C."/>
            <person name="Rusniok C."/>
            <person name="Amend A."/>
            <person name="Baquero F."/>
            <person name="Berche P."/>
            <person name="Bloecker H."/>
            <person name="Brandt P."/>
            <person name="Chakraborty T."/>
            <person name="Charbit A."/>
            <person name="Chetouani F."/>
            <person name="Couve E."/>
            <person name="de Daruvar A."/>
            <person name="Dehoux P."/>
            <person name="Domann E."/>
            <person name="Dominguez-Bernal G."/>
            <person name="Duchaud E."/>
            <person name="Durant L."/>
            <person name="Dussurget O."/>
            <person name="Entian K.-D."/>
            <person name="Fsihi H."/>
            <person name="Garcia-del Portillo F."/>
            <person name="Garrido P."/>
            <person name="Gautier L."/>
            <person name="Goebel W."/>
            <person name="Gomez-Lopez N."/>
            <person name="Hain T."/>
            <person name="Hauf J."/>
            <person name="Jackson D."/>
            <person name="Jones L.-M."/>
            <person name="Kaerst U."/>
            <person name="Kreft J."/>
            <person name="Kuhn M."/>
            <person name="Kunst F."/>
            <person name="Kurapkat G."/>
            <person name="Madueno E."/>
            <person name="Maitournam A."/>
            <person name="Mata Vicente J."/>
            <person name="Ng E."/>
            <person name="Nedjari H."/>
            <person name="Nordsiek G."/>
            <person name="Novella S."/>
            <person name="de Pablos B."/>
            <person name="Perez-Diaz J.-C."/>
            <person name="Purcell R."/>
            <person name="Remmel B."/>
            <person name="Rose M."/>
            <person name="Schlueter T."/>
            <person name="Simoes N."/>
            <person name="Tierrez A."/>
            <person name="Vazquez-Boland J.-A."/>
            <person name="Voss H."/>
            <person name="Wehland J."/>
            <person name="Cossart P."/>
        </authorList>
    </citation>
    <scope>NUCLEOTIDE SEQUENCE [LARGE SCALE GENOMIC DNA]</scope>
    <source>
        <strain>ATCC BAA-680 / CLIP 11262</strain>
    </source>
</reference>
<evidence type="ECO:0000255" key="1">
    <source>
        <dbReference type="HAMAP-Rule" id="MF_01031"/>
    </source>
</evidence>
<feature type="chain" id="PRO_0000141830" description="3-isopropylmalate dehydratase small subunit">
    <location>
        <begin position="1"/>
        <end position="193"/>
    </location>
</feature>
<protein>
    <recommendedName>
        <fullName evidence="1">3-isopropylmalate dehydratase small subunit</fullName>
        <ecNumber evidence="1">4.2.1.33</ecNumber>
    </recommendedName>
    <alternativeName>
        <fullName evidence="1">Alpha-IPM isomerase</fullName>
        <shortName evidence="1">IPMI</shortName>
    </alternativeName>
    <alternativeName>
        <fullName evidence="1">Isopropylmalate isomerase</fullName>
    </alternativeName>
</protein>
<sequence>MEAIKVHIGKTVALMNDNIDTDQIIPKSFLKRIERTGFGEFLFDSWRYLPNRKPNPDFPLNAPDRQEATILITGDNFGCGSSREHAAWALLDYRFRVIIAGSYSDIFYMNCTKNGVLPIVLPREAREKLAKITAEEKVTIDLPKQQVISSVGTYPFEIDATWKNKFINGLDDIAITFEHIDAIKAYEQKVDSI</sequence>
<dbReference type="EC" id="4.2.1.33" evidence="1"/>
<dbReference type="EMBL" id="AL596171">
    <property type="protein sequence ID" value="CAC97327.1"/>
    <property type="molecule type" value="Genomic_DNA"/>
</dbReference>
<dbReference type="PIR" id="AG1694">
    <property type="entry name" value="AG1694"/>
</dbReference>
<dbReference type="RefSeq" id="WP_010991749.1">
    <property type="nucleotide sequence ID" value="NC_003212.1"/>
</dbReference>
<dbReference type="SMR" id="Q92A25"/>
<dbReference type="STRING" id="272626.gene:17566455"/>
<dbReference type="GeneID" id="93235436"/>
<dbReference type="KEGG" id="lin:leuD"/>
<dbReference type="eggNOG" id="COG0066">
    <property type="taxonomic scope" value="Bacteria"/>
</dbReference>
<dbReference type="HOGENOM" id="CLU_081378_0_3_9"/>
<dbReference type="OrthoDB" id="9777465at2"/>
<dbReference type="UniPathway" id="UPA00048">
    <property type="reaction ID" value="UER00071"/>
</dbReference>
<dbReference type="Proteomes" id="UP000002513">
    <property type="component" value="Chromosome"/>
</dbReference>
<dbReference type="GO" id="GO:0009316">
    <property type="term" value="C:3-isopropylmalate dehydratase complex"/>
    <property type="evidence" value="ECO:0007669"/>
    <property type="project" value="InterPro"/>
</dbReference>
<dbReference type="GO" id="GO:0003861">
    <property type="term" value="F:3-isopropylmalate dehydratase activity"/>
    <property type="evidence" value="ECO:0007669"/>
    <property type="project" value="UniProtKB-UniRule"/>
</dbReference>
<dbReference type="GO" id="GO:0009098">
    <property type="term" value="P:L-leucine biosynthetic process"/>
    <property type="evidence" value="ECO:0007669"/>
    <property type="project" value="UniProtKB-UniRule"/>
</dbReference>
<dbReference type="CDD" id="cd01577">
    <property type="entry name" value="IPMI_Swivel"/>
    <property type="match status" value="1"/>
</dbReference>
<dbReference type="FunFam" id="3.20.19.10:FF:000003">
    <property type="entry name" value="3-isopropylmalate dehydratase small subunit"/>
    <property type="match status" value="1"/>
</dbReference>
<dbReference type="Gene3D" id="3.20.19.10">
    <property type="entry name" value="Aconitase, domain 4"/>
    <property type="match status" value="1"/>
</dbReference>
<dbReference type="HAMAP" id="MF_01031">
    <property type="entry name" value="LeuD_type1"/>
    <property type="match status" value="1"/>
</dbReference>
<dbReference type="InterPro" id="IPR004431">
    <property type="entry name" value="3-IsopropMal_deHydase_ssu"/>
</dbReference>
<dbReference type="InterPro" id="IPR015928">
    <property type="entry name" value="Aconitase/3IPM_dehydase_swvl"/>
</dbReference>
<dbReference type="InterPro" id="IPR000573">
    <property type="entry name" value="AconitaseA/IPMdHydase_ssu_swvl"/>
</dbReference>
<dbReference type="InterPro" id="IPR033940">
    <property type="entry name" value="IPMI_Swivel"/>
</dbReference>
<dbReference type="InterPro" id="IPR050075">
    <property type="entry name" value="LeuD"/>
</dbReference>
<dbReference type="NCBIfam" id="TIGR00171">
    <property type="entry name" value="leuD"/>
    <property type="match status" value="1"/>
</dbReference>
<dbReference type="NCBIfam" id="NF002458">
    <property type="entry name" value="PRK01641.1"/>
    <property type="match status" value="1"/>
</dbReference>
<dbReference type="PANTHER" id="PTHR43345:SF5">
    <property type="entry name" value="3-ISOPROPYLMALATE DEHYDRATASE SMALL SUBUNIT"/>
    <property type="match status" value="1"/>
</dbReference>
<dbReference type="PANTHER" id="PTHR43345">
    <property type="entry name" value="3-ISOPROPYLMALATE DEHYDRATASE SMALL SUBUNIT 2-RELATED-RELATED"/>
    <property type="match status" value="1"/>
</dbReference>
<dbReference type="Pfam" id="PF00694">
    <property type="entry name" value="Aconitase_C"/>
    <property type="match status" value="1"/>
</dbReference>
<dbReference type="SUPFAM" id="SSF52016">
    <property type="entry name" value="LeuD/IlvD-like"/>
    <property type="match status" value="1"/>
</dbReference>
<keyword id="KW-0028">Amino-acid biosynthesis</keyword>
<keyword id="KW-0100">Branched-chain amino acid biosynthesis</keyword>
<keyword id="KW-0432">Leucine biosynthesis</keyword>
<keyword id="KW-0456">Lyase</keyword>